<sequence length="403" mass="44542">MTSYSYRQTSAMSSFGGTGGGSVRIGSGGVFRAPSIHGGSGGRGVSVSSTRFVTSSSGSYGGVRGGSFSGTLAVSDGLLSGNEKITMQNLNDRLASYLDKVRALEQANGELEVKIRDWYQKQGPGPSRDYNHYFKTIEDLRDKILGATIDNSKIVLQIDNARLAADDFRTKFETEHALRLSVEADINGLRRVLDELTLARTDLEMQIESLKEELAYLKKNHEEEITALRSQVGGQVSVEVDSTPGVDLAKILSEMRSQYEIMAEKNRKDAEATYLARIEELNTQVAVHSEQIQISKTEVTDLRRTLQGLEIELQSQLSMKAALEGTLAETEARYGVQLSQIQSVISGFEAQLSDVRADIERQNQEYKQLMDIKSRLEQEIATYRSLLEGQEAHYNNLPTPKAI</sequence>
<gene>
    <name type="primary">Krt19</name>
    <name type="synonym">Krt1-19</name>
</gene>
<organism>
    <name type="scientific">Mus musculus</name>
    <name type="common">Mouse</name>
    <dbReference type="NCBI Taxonomy" id="10090"/>
    <lineage>
        <taxon>Eukaryota</taxon>
        <taxon>Metazoa</taxon>
        <taxon>Chordata</taxon>
        <taxon>Craniata</taxon>
        <taxon>Vertebrata</taxon>
        <taxon>Euteleostomi</taxon>
        <taxon>Mammalia</taxon>
        <taxon>Eutheria</taxon>
        <taxon>Euarchontoglires</taxon>
        <taxon>Glires</taxon>
        <taxon>Rodentia</taxon>
        <taxon>Myomorpha</taxon>
        <taxon>Muroidea</taxon>
        <taxon>Muridae</taxon>
        <taxon>Murinae</taxon>
        <taxon>Mus</taxon>
        <taxon>Mus</taxon>
    </lineage>
</organism>
<keyword id="KW-0175">Coiled coil</keyword>
<keyword id="KW-0403">Intermediate filament</keyword>
<keyword id="KW-0416">Keratin</keyword>
<keyword id="KW-0488">Methylation</keyword>
<keyword id="KW-0597">Phosphoprotein</keyword>
<keyword id="KW-1185">Reference proteome</keyword>
<evidence type="ECO:0000250" key="1"/>
<evidence type="ECO:0000250" key="2">
    <source>
        <dbReference type="UniProtKB" id="P08727"/>
    </source>
</evidence>
<evidence type="ECO:0000250" key="3">
    <source>
        <dbReference type="UniProtKB" id="Q63279"/>
    </source>
</evidence>
<evidence type="ECO:0000255" key="4">
    <source>
        <dbReference type="PROSITE-ProRule" id="PRU01188"/>
    </source>
</evidence>
<evidence type="ECO:0000269" key="5">
    <source>
    </source>
</evidence>
<evidence type="ECO:0000269" key="6">
    <source>
    </source>
</evidence>
<evidence type="ECO:0007744" key="7">
    <source>
    </source>
</evidence>
<evidence type="ECO:0007744" key="8">
    <source>
    </source>
</evidence>
<feature type="chain" id="PRO_0000063672" description="Keratin, type I cytoskeletal 19">
    <location>
        <begin position="1"/>
        <end position="403"/>
    </location>
</feature>
<feature type="domain" description="IF rod" evidence="4">
    <location>
        <begin position="83"/>
        <end position="394"/>
    </location>
</feature>
<feature type="region of interest" description="Head">
    <location>
        <begin position="1"/>
        <end position="82"/>
    </location>
</feature>
<feature type="region of interest" description="Coil 1A">
    <location>
        <begin position="83"/>
        <end position="118"/>
    </location>
</feature>
<feature type="region of interest" description="Linker 1">
    <location>
        <begin position="119"/>
        <end position="136"/>
    </location>
</feature>
<feature type="region of interest" description="Coil 1B">
    <location>
        <begin position="137"/>
        <end position="228"/>
    </location>
</feature>
<feature type="region of interest" description="Linker 12">
    <location>
        <begin position="229"/>
        <end position="251"/>
    </location>
</feature>
<feature type="region of interest" description="Necessary for interaction with PNN" evidence="1">
    <location>
        <begin position="247"/>
        <end position="393"/>
    </location>
</feature>
<feature type="region of interest" description="Coil 2">
    <location>
        <begin position="252"/>
        <end position="390"/>
    </location>
</feature>
<feature type="region of interest" description="Rod-like helical tail">
    <location>
        <begin position="391"/>
        <end position="403"/>
    </location>
</feature>
<feature type="site" description="Stutter">
    <location>
        <position position="270"/>
    </location>
</feature>
<feature type="site" description="Stutter">
    <location>
        <position position="330"/>
    </location>
</feature>
<feature type="modified residue" description="Omega-N-methylarginine" evidence="2">
    <location>
        <position position="7"/>
    </location>
</feature>
<feature type="modified residue" description="Phosphoserine" evidence="2">
    <location>
        <position position="14"/>
    </location>
</feature>
<feature type="modified residue" description="Phosphoserine" evidence="2">
    <location>
        <position position="22"/>
    </location>
</feature>
<feature type="modified residue" description="Asymmetric dimethylarginine; alternate" evidence="2">
    <location>
        <position position="24"/>
    </location>
</feature>
<feature type="modified residue" description="Omega-N-methylarginine; alternate" evidence="8">
    <location>
        <position position="24"/>
    </location>
</feature>
<feature type="modified residue" description="Phosphoserine" evidence="3">
    <location>
        <position position="27"/>
    </location>
</feature>
<feature type="modified residue" description="Omega-N-methylarginine" evidence="8">
    <location>
        <position position="32"/>
    </location>
</feature>
<feature type="modified residue" description="Phosphoserine" evidence="2">
    <location>
        <position position="35"/>
    </location>
</feature>
<feature type="modified residue" description="Phosphoserine" evidence="3">
    <location>
        <position position="40"/>
    </location>
</feature>
<feature type="modified residue" description="Omega-N-methylarginine" evidence="8">
    <location>
        <position position="43"/>
    </location>
</feature>
<feature type="modified residue" description="Omega-N-methylarginine" evidence="8">
    <location>
        <position position="51"/>
    </location>
</feature>
<feature type="modified residue" description="Phosphoserine" evidence="3">
    <location>
        <position position="57"/>
    </location>
</feature>
<feature type="modified residue" description="Omega-N-methylarginine" evidence="8">
    <location>
        <position position="64"/>
    </location>
</feature>
<feature type="modified residue" description="Phosphoserine" evidence="7">
    <location>
        <position position="67"/>
    </location>
</feature>
<feature type="modified residue" description="Phosphoserine" evidence="7">
    <location>
        <position position="75"/>
    </location>
</feature>
<feature type="modified residue" description="Phosphothreonine" evidence="2">
    <location>
        <position position="326"/>
    </location>
</feature>
<feature type="modified residue" description="Phosphotyrosine" evidence="5">
    <location>
        <position position="394"/>
    </location>
</feature>
<proteinExistence type="evidence at protein level"/>
<comment type="function">
    <text evidence="1">Involved in the organization of myofibers. Together with KRT8, helps to link the contractile apparatus to dystrophin at the costameres of striated muscle (By similarity).</text>
</comment>
<comment type="subunit">
    <text evidence="1">Heterotetramer of two type I and two type II keratins. Interacts with PNN and the actin-binding domain of DMD (By similarity).</text>
</comment>
<comment type="developmental stage">
    <text evidence="6">Expressed throughout embryonic development with highest levels at 8.5 dpc. Expression decreases by 11.5 dpc and increases again by 17.5 dpc.</text>
</comment>
<comment type="domain">
    <text>This keratin differs from all other IF proteins in lacking the C-terminal tail domain.</text>
</comment>
<comment type="miscellaneous">
    <text>There are two types of cytoskeletal and microfibrillar keratin: I (acidic; 40-55 kDa) and II (neutral to basic; 56-70 kDa).</text>
</comment>
<comment type="similarity">
    <text evidence="4">Belongs to the intermediate filament family.</text>
</comment>
<name>K1C19_MOUSE</name>
<protein>
    <recommendedName>
        <fullName>Keratin, type I cytoskeletal 19</fullName>
    </recommendedName>
    <alternativeName>
        <fullName>Cytokeratin-19</fullName>
        <shortName>CK-19</shortName>
    </alternativeName>
    <alternativeName>
        <fullName>Keratin-19</fullName>
        <shortName>K19</shortName>
    </alternativeName>
</protein>
<dbReference type="EMBL" id="M28698">
    <property type="protein sequence ID" value="AAA60432.1"/>
    <property type="molecule type" value="mRNA"/>
</dbReference>
<dbReference type="EMBL" id="M36120">
    <property type="protein sequence ID" value="AAA39371.1"/>
    <property type="molecule type" value="Genomic_DNA"/>
</dbReference>
<dbReference type="EMBL" id="BC034561">
    <property type="protein sequence ID" value="AAH34561.1"/>
    <property type="molecule type" value="mRNA"/>
</dbReference>
<dbReference type="EMBL" id="BC085304">
    <property type="protein sequence ID" value="AAH85304.1"/>
    <property type="molecule type" value="mRNA"/>
</dbReference>
<dbReference type="CCDS" id="CCDS25411.1"/>
<dbReference type="PIR" id="JQ0028">
    <property type="entry name" value="JQ0028"/>
</dbReference>
<dbReference type="RefSeq" id="NP_032497.1">
    <property type="nucleotide sequence ID" value="NM_008471.3"/>
</dbReference>
<dbReference type="SMR" id="P19001"/>
<dbReference type="BioGRID" id="201024">
    <property type="interactions" value="10"/>
</dbReference>
<dbReference type="FunCoup" id="P19001">
    <property type="interactions" value="213"/>
</dbReference>
<dbReference type="IntAct" id="P19001">
    <property type="interactions" value="1"/>
</dbReference>
<dbReference type="STRING" id="10090.ENSMUSP00000007317"/>
<dbReference type="GlyGen" id="P19001">
    <property type="glycosylation" value="2 sites, 1 O-linked glycan (2 sites)"/>
</dbReference>
<dbReference type="iPTMnet" id="P19001"/>
<dbReference type="PhosphoSitePlus" id="P19001"/>
<dbReference type="SwissPalm" id="P19001"/>
<dbReference type="jPOST" id="P19001"/>
<dbReference type="PaxDb" id="10090-ENSMUSP00000007317"/>
<dbReference type="ProteomicsDB" id="268936"/>
<dbReference type="Antibodypedia" id="1224">
    <property type="antibodies" value="3455 antibodies from 57 providers"/>
</dbReference>
<dbReference type="DNASU" id="16669"/>
<dbReference type="Ensembl" id="ENSMUST00000007317.8">
    <property type="protein sequence ID" value="ENSMUSP00000007317.8"/>
    <property type="gene ID" value="ENSMUSG00000020911.15"/>
</dbReference>
<dbReference type="GeneID" id="16669"/>
<dbReference type="KEGG" id="mmu:16669"/>
<dbReference type="UCSC" id="uc007lkm.2">
    <property type="organism name" value="mouse"/>
</dbReference>
<dbReference type="AGR" id="MGI:96693"/>
<dbReference type="CTD" id="3880"/>
<dbReference type="MGI" id="MGI:96693">
    <property type="gene designation" value="Krt19"/>
</dbReference>
<dbReference type="VEuPathDB" id="HostDB:ENSMUSG00000020911"/>
<dbReference type="eggNOG" id="ENOG502QV0B">
    <property type="taxonomic scope" value="Eukaryota"/>
</dbReference>
<dbReference type="GeneTree" id="ENSGT00940000155258"/>
<dbReference type="HOGENOM" id="CLU_012560_8_1_1"/>
<dbReference type="InParanoid" id="P19001"/>
<dbReference type="OMA" id="DMERQNT"/>
<dbReference type="OrthoDB" id="2441647at2759"/>
<dbReference type="PhylomeDB" id="P19001"/>
<dbReference type="TreeFam" id="TF332742"/>
<dbReference type="Reactome" id="R-MMU-6805567">
    <property type="pathway name" value="Keratinization"/>
</dbReference>
<dbReference type="Reactome" id="R-MMU-6809371">
    <property type="pathway name" value="Formation of the cornified envelope"/>
</dbReference>
<dbReference type="BioGRID-ORCS" id="16669">
    <property type="hits" value="0 hits in 79 CRISPR screens"/>
</dbReference>
<dbReference type="ChiTaRS" id="Krt19">
    <property type="organism name" value="mouse"/>
</dbReference>
<dbReference type="PRO" id="PR:P19001"/>
<dbReference type="Proteomes" id="UP000000589">
    <property type="component" value="Chromosome 11"/>
</dbReference>
<dbReference type="RNAct" id="P19001">
    <property type="molecule type" value="protein"/>
</dbReference>
<dbReference type="Bgee" id="ENSMUSG00000020911">
    <property type="expression patterns" value="Expressed in epithelium of stomach and 181 other cell types or tissues"/>
</dbReference>
<dbReference type="ExpressionAtlas" id="P19001">
    <property type="expression patterns" value="baseline and differential"/>
</dbReference>
<dbReference type="GO" id="GO:0016327">
    <property type="term" value="C:apicolateral plasma membrane"/>
    <property type="evidence" value="ECO:0000314"/>
    <property type="project" value="UniProtKB"/>
</dbReference>
<dbReference type="GO" id="GO:0071944">
    <property type="term" value="C:cell periphery"/>
    <property type="evidence" value="ECO:0000266"/>
    <property type="project" value="MGI"/>
</dbReference>
<dbReference type="GO" id="GO:0043034">
    <property type="term" value="C:costamere"/>
    <property type="evidence" value="ECO:0007669"/>
    <property type="project" value="Ensembl"/>
</dbReference>
<dbReference type="GO" id="GO:0016010">
    <property type="term" value="C:dystrophin-associated glycoprotein complex"/>
    <property type="evidence" value="ECO:0007669"/>
    <property type="project" value="Ensembl"/>
</dbReference>
<dbReference type="GO" id="GO:0005882">
    <property type="term" value="C:intermediate filament"/>
    <property type="evidence" value="ECO:0007669"/>
    <property type="project" value="UniProtKB-KW"/>
</dbReference>
<dbReference type="GO" id="GO:0042383">
    <property type="term" value="C:sarcolemma"/>
    <property type="evidence" value="ECO:0000314"/>
    <property type="project" value="MGI"/>
</dbReference>
<dbReference type="GO" id="GO:1990357">
    <property type="term" value="C:terminal web"/>
    <property type="evidence" value="ECO:0000314"/>
    <property type="project" value="MGI"/>
</dbReference>
<dbReference type="GO" id="GO:0030018">
    <property type="term" value="C:Z disc"/>
    <property type="evidence" value="ECO:0000314"/>
    <property type="project" value="MGI"/>
</dbReference>
<dbReference type="GO" id="GO:0044877">
    <property type="term" value="F:protein-containing complex binding"/>
    <property type="evidence" value="ECO:0007669"/>
    <property type="project" value="Ensembl"/>
</dbReference>
<dbReference type="GO" id="GO:0008307">
    <property type="term" value="F:structural constituent of muscle"/>
    <property type="evidence" value="ECO:0007669"/>
    <property type="project" value="Ensembl"/>
</dbReference>
<dbReference type="GO" id="GO:0060706">
    <property type="term" value="P:cell differentiation involved in embryonic placenta development"/>
    <property type="evidence" value="ECO:0000316"/>
    <property type="project" value="MGI"/>
</dbReference>
<dbReference type="GO" id="GO:0007219">
    <property type="term" value="P:Notch signaling pathway"/>
    <property type="evidence" value="ECO:0000314"/>
    <property type="project" value="MGI"/>
</dbReference>
<dbReference type="GO" id="GO:0043627">
    <property type="term" value="P:response to estrogen"/>
    <property type="evidence" value="ECO:0007669"/>
    <property type="project" value="Ensembl"/>
</dbReference>
<dbReference type="GO" id="GO:0045214">
    <property type="term" value="P:sarcomere organization"/>
    <property type="evidence" value="ECO:0007669"/>
    <property type="project" value="Ensembl"/>
</dbReference>
<dbReference type="FunFam" id="1.20.5.1160:FF:000002">
    <property type="entry name" value="Type I keratin 10"/>
    <property type="match status" value="1"/>
</dbReference>
<dbReference type="FunFam" id="1.20.5.170:FF:000002">
    <property type="entry name" value="Type I keratin KA11"/>
    <property type="match status" value="1"/>
</dbReference>
<dbReference type="FunFam" id="1.20.5.500:FF:000001">
    <property type="entry name" value="Type II keratin 23"/>
    <property type="match status" value="1"/>
</dbReference>
<dbReference type="Gene3D" id="1.20.5.170">
    <property type="match status" value="1"/>
</dbReference>
<dbReference type="Gene3D" id="1.20.5.500">
    <property type="entry name" value="Single helix bin"/>
    <property type="match status" value="1"/>
</dbReference>
<dbReference type="Gene3D" id="1.20.5.1160">
    <property type="entry name" value="Vasodilator-stimulated phosphoprotein"/>
    <property type="match status" value="1"/>
</dbReference>
<dbReference type="InterPro" id="IPR018039">
    <property type="entry name" value="IF_conserved"/>
</dbReference>
<dbReference type="InterPro" id="IPR039008">
    <property type="entry name" value="IF_rod_dom"/>
</dbReference>
<dbReference type="InterPro" id="IPR002957">
    <property type="entry name" value="Keratin_I"/>
</dbReference>
<dbReference type="PANTHER" id="PTHR23239">
    <property type="entry name" value="INTERMEDIATE FILAMENT"/>
    <property type="match status" value="1"/>
</dbReference>
<dbReference type="PANTHER" id="PTHR23239:SF14">
    <property type="entry name" value="KERATIN, TYPE I CYTOSKELETAL 19"/>
    <property type="match status" value="1"/>
</dbReference>
<dbReference type="Pfam" id="PF00038">
    <property type="entry name" value="Filament"/>
    <property type="match status" value="1"/>
</dbReference>
<dbReference type="PRINTS" id="PR01248">
    <property type="entry name" value="TYPE1KERATIN"/>
</dbReference>
<dbReference type="SMART" id="SM01391">
    <property type="entry name" value="Filament"/>
    <property type="match status" value="1"/>
</dbReference>
<dbReference type="SUPFAM" id="SSF64593">
    <property type="entry name" value="Intermediate filament protein, coiled coil region"/>
    <property type="match status" value="2"/>
</dbReference>
<dbReference type="SUPFAM" id="SSF46579">
    <property type="entry name" value="Prefoldin"/>
    <property type="match status" value="1"/>
</dbReference>
<dbReference type="PROSITE" id="PS00226">
    <property type="entry name" value="IF_ROD_1"/>
    <property type="match status" value="1"/>
</dbReference>
<dbReference type="PROSITE" id="PS51842">
    <property type="entry name" value="IF_ROD_2"/>
    <property type="match status" value="1"/>
</dbReference>
<reference key="1">
    <citation type="journal article" date="1989" name="Gene">
        <title>Molecular cloning and characterization of cDNA encoding mouse cytokeratin no. 19.</title>
        <authorList>
            <person name="Ichinose Y."/>
            <person name="Hashido K."/>
            <person name="Miyamoto H."/>
            <person name="Nagata T."/>
            <person name="Nozaki M."/>
            <person name="Morita T."/>
            <person name="Matsushiro A."/>
        </authorList>
    </citation>
    <scope>NUCLEOTIDE SEQUENCE [MRNA]</scope>
</reference>
<reference key="2">
    <citation type="journal article" date="1989" name="Gene">
        <title>Mouse keratin 19: complete amino acid sequence and gene expression during development.</title>
        <authorList>
            <person name="Lussier M."/>
            <person name="Ouellet T."/>
            <person name="Lampron C."/>
            <person name="Lapointe L."/>
            <person name="Royal A."/>
        </authorList>
    </citation>
    <scope>NUCLEOTIDE SEQUENCE [MRNA]</scope>
    <scope>DEVELOPMENTAL STAGE</scope>
    <source>
        <tissue>Embryo</tissue>
    </source>
</reference>
<reference key="3">
    <citation type="journal article" date="1990" name="Gene">
        <title>The mouse keratin 19-encoding gene: sequence, structure and chromosomal assignment.</title>
        <authorList>
            <person name="Lussier M."/>
            <person name="Filion M."/>
            <person name="Compton J.G."/>
            <person name="Nadeau J.H."/>
            <person name="Lapointe L."/>
            <person name="Royal A."/>
        </authorList>
    </citation>
    <scope>NUCLEOTIDE SEQUENCE [GENOMIC DNA]</scope>
</reference>
<reference key="4">
    <citation type="journal article" date="2004" name="Genome Res.">
        <title>The status, quality, and expansion of the NIH full-length cDNA project: the Mammalian Gene Collection (MGC).</title>
        <authorList>
            <consortium name="The MGC Project Team"/>
        </authorList>
    </citation>
    <scope>NUCLEOTIDE SEQUENCE [LARGE SCALE MRNA]</scope>
    <source>
        <strain>FVB/N-3</strain>
        <tissue>Mammary gland</tissue>
    </source>
</reference>
<reference key="5">
    <citation type="journal article" date="2010" name="Cell">
        <title>A tissue-specific atlas of mouse protein phosphorylation and expression.</title>
        <authorList>
            <person name="Huttlin E.L."/>
            <person name="Jedrychowski M.P."/>
            <person name="Elias J.E."/>
            <person name="Goswami T."/>
            <person name="Rad R."/>
            <person name="Beausoleil S.A."/>
            <person name="Villen J."/>
            <person name="Haas W."/>
            <person name="Sowa M.E."/>
            <person name="Gygi S.P."/>
        </authorList>
    </citation>
    <scope>PHOSPHORYLATION [LARGE SCALE ANALYSIS] AT SER-67 AND SER-75</scope>
    <scope>IDENTIFICATION BY MASS SPECTROMETRY [LARGE SCALE ANALYSIS]</scope>
    <source>
        <tissue>Brain</tissue>
        <tissue>Brown adipose tissue</tissue>
        <tissue>Kidney</tissue>
        <tissue>Lung</tissue>
        <tissue>Pancreas</tissue>
    </source>
</reference>
<reference key="6">
    <citation type="journal article" date="2010" name="PLoS ONE">
        <title>Characterization of in vivo keratin 19 phosphorylation on tyrosine-391.</title>
        <authorList>
            <person name="Zhou Q."/>
            <person name="Snider N.T."/>
            <person name="Liao J."/>
            <person name="Li D.H."/>
            <person name="Hong A."/>
            <person name="Ku N.O."/>
            <person name="Cartwright C.A."/>
            <person name="Omary M.B."/>
        </authorList>
    </citation>
    <scope>PHOSPHORYLATION AT TYR-394</scope>
</reference>
<reference key="7">
    <citation type="journal article" date="2014" name="Mol. Cell. Proteomics">
        <title>Immunoaffinity enrichment and mass spectrometry analysis of protein methylation.</title>
        <authorList>
            <person name="Guo A."/>
            <person name="Gu H."/>
            <person name="Zhou J."/>
            <person name="Mulhern D."/>
            <person name="Wang Y."/>
            <person name="Lee K.A."/>
            <person name="Yang V."/>
            <person name="Aguiar M."/>
            <person name="Kornhauser J."/>
            <person name="Jia X."/>
            <person name="Ren J."/>
            <person name="Beausoleil S.A."/>
            <person name="Silva J.C."/>
            <person name="Vemulapalli V."/>
            <person name="Bedford M.T."/>
            <person name="Comb M.J."/>
        </authorList>
    </citation>
    <scope>METHYLATION [LARGE SCALE ANALYSIS] AT ARG-24; ARG-32; ARG-43; ARG-51 AND ARG-64</scope>
    <scope>IDENTIFICATION BY MASS SPECTROMETRY [LARGE SCALE ANALYSIS]</scope>
    <source>
        <tissue>Brain</tissue>
        <tissue>Embryo</tissue>
    </source>
</reference>
<accession>P19001</accession>